<dbReference type="EMBL" id="CP001056">
    <property type="protein sequence ID" value="ACD21768.1"/>
    <property type="molecule type" value="Genomic_DNA"/>
</dbReference>
<dbReference type="SMR" id="B2TIJ0"/>
<dbReference type="KEGG" id="cbk:CLL_A0253"/>
<dbReference type="PATRIC" id="fig|935198.13.peg.228"/>
<dbReference type="HOGENOM" id="CLU_065464_1_2_9"/>
<dbReference type="Proteomes" id="UP000001195">
    <property type="component" value="Chromosome"/>
</dbReference>
<dbReference type="GO" id="GO:0022625">
    <property type="term" value="C:cytosolic large ribosomal subunit"/>
    <property type="evidence" value="ECO:0007669"/>
    <property type="project" value="TreeGrafter"/>
</dbReference>
<dbReference type="GO" id="GO:0019843">
    <property type="term" value="F:rRNA binding"/>
    <property type="evidence" value="ECO:0007669"/>
    <property type="project" value="UniProtKB-UniRule"/>
</dbReference>
<dbReference type="GO" id="GO:0003735">
    <property type="term" value="F:structural constituent of ribosome"/>
    <property type="evidence" value="ECO:0007669"/>
    <property type="project" value="InterPro"/>
</dbReference>
<dbReference type="GO" id="GO:0002181">
    <property type="term" value="P:cytoplasmic translation"/>
    <property type="evidence" value="ECO:0007669"/>
    <property type="project" value="TreeGrafter"/>
</dbReference>
<dbReference type="FunFam" id="3.90.930.12:FF:000001">
    <property type="entry name" value="50S ribosomal protein L6"/>
    <property type="match status" value="1"/>
</dbReference>
<dbReference type="FunFam" id="3.90.930.12:FF:000002">
    <property type="entry name" value="50S ribosomal protein L6"/>
    <property type="match status" value="1"/>
</dbReference>
<dbReference type="Gene3D" id="3.90.930.12">
    <property type="entry name" value="Ribosomal protein L6, alpha-beta domain"/>
    <property type="match status" value="2"/>
</dbReference>
<dbReference type="HAMAP" id="MF_01365_B">
    <property type="entry name" value="Ribosomal_uL6_B"/>
    <property type="match status" value="1"/>
</dbReference>
<dbReference type="InterPro" id="IPR000702">
    <property type="entry name" value="Ribosomal_uL6-like"/>
</dbReference>
<dbReference type="InterPro" id="IPR036789">
    <property type="entry name" value="Ribosomal_uL6-like_a/b-dom_sf"/>
</dbReference>
<dbReference type="InterPro" id="IPR020040">
    <property type="entry name" value="Ribosomal_uL6_a/b-dom"/>
</dbReference>
<dbReference type="InterPro" id="IPR019906">
    <property type="entry name" value="Ribosomal_uL6_bac-type"/>
</dbReference>
<dbReference type="InterPro" id="IPR002358">
    <property type="entry name" value="Ribosomal_uL6_CS"/>
</dbReference>
<dbReference type="NCBIfam" id="TIGR03654">
    <property type="entry name" value="L6_bact"/>
    <property type="match status" value="1"/>
</dbReference>
<dbReference type="PANTHER" id="PTHR11655">
    <property type="entry name" value="60S/50S RIBOSOMAL PROTEIN L6/L9"/>
    <property type="match status" value="1"/>
</dbReference>
<dbReference type="PANTHER" id="PTHR11655:SF14">
    <property type="entry name" value="LARGE RIBOSOMAL SUBUNIT PROTEIN UL6M"/>
    <property type="match status" value="1"/>
</dbReference>
<dbReference type="Pfam" id="PF00347">
    <property type="entry name" value="Ribosomal_L6"/>
    <property type="match status" value="2"/>
</dbReference>
<dbReference type="PIRSF" id="PIRSF002162">
    <property type="entry name" value="Ribosomal_L6"/>
    <property type="match status" value="1"/>
</dbReference>
<dbReference type="PRINTS" id="PR00059">
    <property type="entry name" value="RIBOSOMALL6"/>
</dbReference>
<dbReference type="SUPFAM" id="SSF56053">
    <property type="entry name" value="Ribosomal protein L6"/>
    <property type="match status" value="2"/>
</dbReference>
<dbReference type="PROSITE" id="PS00525">
    <property type="entry name" value="RIBOSOMAL_L6_1"/>
    <property type="match status" value="1"/>
</dbReference>
<organism>
    <name type="scientific">Clostridium botulinum (strain Eklund 17B / Type B)</name>
    <dbReference type="NCBI Taxonomy" id="935198"/>
    <lineage>
        <taxon>Bacteria</taxon>
        <taxon>Bacillati</taxon>
        <taxon>Bacillota</taxon>
        <taxon>Clostridia</taxon>
        <taxon>Eubacteriales</taxon>
        <taxon>Clostridiaceae</taxon>
        <taxon>Clostridium</taxon>
    </lineage>
</organism>
<name>RL6_CLOBB</name>
<proteinExistence type="inferred from homology"/>
<comment type="function">
    <text evidence="1">This protein binds to the 23S rRNA, and is important in its secondary structure. It is located near the subunit interface in the base of the L7/L12 stalk, and near the tRNA binding site of the peptidyltransferase center.</text>
</comment>
<comment type="subunit">
    <text evidence="1">Part of the 50S ribosomal subunit.</text>
</comment>
<comment type="similarity">
    <text evidence="1">Belongs to the universal ribosomal protein uL6 family.</text>
</comment>
<accession>B2TIJ0</accession>
<reference key="1">
    <citation type="submission" date="2008-04" db="EMBL/GenBank/DDBJ databases">
        <title>Complete sequence of Clostridium botulinum strain Eklund.</title>
        <authorList>
            <person name="Brinkac L.M."/>
            <person name="Brown J.L."/>
            <person name="Bruce D."/>
            <person name="Detter C."/>
            <person name="Munk C."/>
            <person name="Smith L.A."/>
            <person name="Smith T.J."/>
            <person name="Sutton G."/>
            <person name="Brettin T.S."/>
        </authorList>
    </citation>
    <scope>NUCLEOTIDE SEQUENCE [LARGE SCALE GENOMIC DNA]</scope>
    <source>
        <strain>Eklund 17B / Type B</strain>
    </source>
</reference>
<protein>
    <recommendedName>
        <fullName evidence="1">Large ribosomal subunit protein uL6</fullName>
    </recommendedName>
    <alternativeName>
        <fullName evidence="2">50S ribosomal protein L6</fullName>
    </alternativeName>
</protein>
<gene>
    <name evidence="1" type="primary">rplF</name>
    <name type="ordered locus">CLL_A0253</name>
</gene>
<feature type="chain" id="PRO_1000143964" description="Large ribosomal subunit protein uL6">
    <location>
        <begin position="1"/>
        <end position="180"/>
    </location>
</feature>
<keyword id="KW-0687">Ribonucleoprotein</keyword>
<keyword id="KW-0689">Ribosomal protein</keyword>
<keyword id="KW-0694">RNA-binding</keyword>
<keyword id="KW-0699">rRNA-binding</keyword>
<evidence type="ECO:0000255" key="1">
    <source>
        <dbReference type="HAMAP-Rule" id="MF_01365"/>
    </source>
</evidence>
<evidence type="ECO:0000305" key="2"/>
<sequence length="180" mass="19693">MSRVGRLPIAVPAGITVTVTPDNVVTVKGPKGELVKTMHKDINIAVENNEVIVTRPSDQKAHRALHGLTRALINNMVIGVNEGYQKTLELVGVGYRAQLQGKKLVMNLGYSHPVEIEPIEGITFETPAATKVIVKGIDKEKVGAAAADIRKWRLPEPYKGKGIKFENEVIRRKEGKTGKK</sequence>